<protein>
    <recommendedName>
        <fullName>Sulfate adenylyltransferase subunit 2</fullName>
        <ecNumber>2.7.7.4</ecNumber>
    </recommendedName>
    <alternativeName>
        <fullName>ATP-sulfurylase small subunit</fullName>
    </alternativeName>
    <alternativeName>
        <fullName>Nodulation protein P</fullName>
    </alternativeName>
    <alternativeName>
        <fullName>Sulfate adenylate transferase</fullName>
        <shortName>SAT</shortName>
    </alternativeName>
</protein>
<feature type="chain" id="PRO_0000100687" description="Sulfate adenylyltransferase subunit 2">
    <location>
        <begin position="1"/>
        <end position="299"/>
    </location>
</feature>
<reference key="1">
    <citation type="journal article" date="1997" name="Microbiology">
        <title>Functional redundancy of genes for sulphate activation enzymes in Rhizobium sp. BR816.</title>
        <authorList>
            <person name="Laeremans T."/>
            <person name="Coolsaet N."/>
            <person name="Verreth C."/>
            <person name="Snoeck C."/>
            <person name="Hellings N."/>
            <person name="Vanderleyden J."/>
            <person name="Martinez-Romero E."/>
        </authorList>
    </citation>
    <scope>NUCLEOTIDE SEQUENCE [GENOMIC DNA]</scope>
</reference>
<organism>
    <name type="scientific">Rhizobium sp. (strain BR816)</name>
    <dbReference type="NCBI Taxonomy" id="1057002"/>
    <lineage>
        <taxon>Bacteria</taxon>
        <taxon>Pseudomonadati</taxon>
        <taxon>Pseudomonadota</taxon>
        <taxon>Alphaproteobacteria</taxon>
        <taxon>Hyphomicrobiales</taxon>
        <taxon>Rhizobiaceae</taxon>
        <taxon>Sinorhizobium/Ensifer group</taxon>
        <taxon>Ensifer</taxon>
    </lineage>
</organism>
<gene>
    <name type="primary">nodP</name>
</gene>
<sequence>MSLANLRRLEAEAIHVLREVVATFSNPVVLYSIGKDSSVLLHLAMKAFFPAKPPFPFLHVDTTWKFREMIAFRDRMARELGFNLLVHTNQDGVDQGIGPFTHGSNLHTHVMKTMALRQALETYGFDAALAGARRDEEKSRAKERMFSIRNAQHGWDPKRQRPEMWKTYNTRVGAGETMRVFPLSNWTEFDIWQYILQENIPIVPLYFAARRPVVRRDGMLIMVDDERMPIEPGEEVMDRMVRFRTLGCYPLTGAIDSEAATVPDILREMLTVRTSERLSRLIDTDEAGAMEKKKREGYF</sequence>
<comment type="function">
    <text>Proposed to provide activated sulfate for transfer to nod factor.</text>
</comment>
<comment type="catalytic activity">
    <reaction>
        <text>sulfate + ATP + H(+) = adenosine 5'-phosphosulfate + diphosphate</text>
        <dbReference type="Rhea" id="RHEA:18133"/>
        <dbReference type="ChEBI" id="CHEBI:15378"/>
        <dbReference type="ChEBI" id="CHEBI:16189"/>
        <dbReference type="ChEBI" id="CHEBI:30616"/>
        <dbReference type="ChEBI" id="CHEBI:33019"/>
        <dbReference type="ChEBI" id="CHEBI:58243"/>
        <dbReference type="EC" id="2.7.7.4"/>
    </reaction>
</comment>
<comment type="subunit">
    <text evidence="1">Sulfate-activating enzymes, NodP and NodQ, may be physically associated.</text>
</comment>
<comment type="similarity">
    <text evidence="1">Belongs to the PAPS reductase family. CysD subfamily.</text>
</comment>
<name>NODP_RHISB</name>
<dbReference type="EC" id="2.7.7.4"/>
<dbReference type="EMBL" id="U59507">
    <property type="protein sequence ID" value="AAB95248.1"/>
    <property type="molecule type" value="Genomic_DNA"/>
</dbReference>
<dbReference type="SMR" id="O07308"/>
<dbReference type="OrthoDB" id="9772604at2"/>
<dbReference type="GO" id="GO:0005524">
    <property type="term" value="F:ATP binding"/>
    <property type="evidence" value="ECO:0007669"/>
    <property type="project" value="UniProtKB-KW"/>
</dbReference>
<dbReference type="GO" id="GO:0004781">
    <property type="term" value="F:sulfate adenylyltransferase (ATP) activity"/>
    <property type="evidence" value="ECO:0007669"/>
    <property type="project" value="UniProtKB-UniRule"/>
</dbReference>
<dbReference type="GO" id="GO:0070814">
    <property type="term" value="P:hydrogen sulfide biosynthetic process"/>
    <property type="evidence" value="ECO:0007669"/>
    <property type="project" value="UniProtKB-UniRule"/>
</dbReference>
<dbReference type="GO" id="GO:0000103">
    <property type="term" value="P:sulfate assimilation"/>
    <property type="evidence" value="ECO:0007669"/>
    <property type="project" value="UniProtKB-UniRule"/>
</dbReference>
<dbReference type="FunFam" id="3.40.50.620:FF:000002">
    <property type="entry name" value="Sulfate adenylyltransferase subunit 2"/>
    <property type="match status" value="1"/>
</dbReference>
<dbReference type="Gene3D" id="3.40.50.620">
    <property type="entry name" value="HUPs"/>
    <property type="match status" value="1"/>
</dbReference>
<dbReference type="HAMAP" id="MF_00064">
    <property type="entry name" value="Sulf_adenylyltr_sub2"/>
    <property type="match status" value="1"/>
</dbReference>
<dbReference type="InterPro" id="IPR002500">
    <property type="entry name" value="PAPS_reduct_dom"/>
</dbReference>
<dbReference type="InterPro" id="IPR014729">
    <property type="entry name" value="Rossmann-like_a/b/a_fold"/>
</dbReference>
<dbReference type="InterPro" id="IPR011784">
    <property type="entry name" value="SO4_adenylTrfase_ssu"/>
</dbReference>
<dbReference type="InterPro" id="IPR050128">
    <property type="entry name" value="Sulfate_adenylyltrnsfr_sub2"/>
</dbReference>
<dbReference type="NCBIfam" id="TIGR02039">
    <property type="entry name" value="CysD"/>
    <property type="match status" value="1"/>
</dbReference>
<dbReference type="NCBIfam" id="NF003587">
    <property type="entry name" value="PRK05253.1"/>
    <property type="match status" value="1"/>
</dbReference>
<dbReference type="NCBIfam" id="NF009214">
    <property type="entry name" value="PRK12563.1"/>
    <property type="match status" value="1"/>
</dbReference>
<dbReference type="PANTHER" id="PTHR43196">
    <property type="entry name" value="SULFATE ADENYLYLTRANSFERASE SUBUNIT 2"/>
    <property type="match status" value="1"/>
</dbReference>
<dbReference type="PANTHER" id="PTHR43196:SF1">
    <property type="entry name" value="SULFATE ADENYLYLTRANSFERASE SUBUNIT 2"/>
    <property type="match status" value="1"/>
</dbReference>
<dbReference type="Pfam" id="PF01507">
    <property type="entry name" value="PAPS_reduct"/>
    <property type="match status" value="1"/>
</dbReference>
<dbReference type="PIRSF" id="PIRSF002936">
    <property type="entry name" value="CysDAde_trans"/>
    <property type="match status" value="1"/>
</dbReference>
<dbReference type="SUPFAM" id="SSF52402">
    <property type="entry name" value="Adenine nucleotide alpha hydrolases-like"/>
    <property type="match status" value="1"/>
</dbReference>
<evidence type="ECO:0000305" key="1"/>
<keyword id="KW-0067">ATP-binding</keyword>
<keyword id="KW-0536">Nodulation</keyword>
<keyword id="KW-0547">Nucleotide-binding</keyword>
<keyword id="KW-0548">Nucleotidyltransferase</keyword>
<keyword id="KW-0808">Transferase</keyword>
<accession>O07308</accession>
<proteinExistence type="inferred from homology"/>